<accession>P86333</accession>
<protein>
    <recommendedName>
        <fullName>Non-specific lipid-transfer protein</fullName>
        <shortName evidence="1">LTP</shortName>
    </recommendedName>
</protein>
<evidence type="ECO:0000250" key="1">
    <source>
        <dbReference type="UniProtKB" id="P83434"/>
    </source>
</evidence>
<evidence type="ECO:0000255" key="2"/>
<evidence type="ECO:0000305" key="3"/>
<sequence>ITCSKVYGDIISCVGYIKGGPIACVGYLKGGPLQQYVHN</sequence>
<reference evidence="3" key="1">
    <citation type="submission" date="2009-07" db="UniProtKB">
        <authorList>
            <person name="Sanchez-Monge R."/>
            <person name="Salcedo G."/>
            <person name="Palacin A."/>
            <person name="Diaz-Perales A."/>
            <person name="Quirce S."/>
        </authorList>
    </citation>
    <scope>PROTEIN SEQUENCE</scope>
</reference>
<proteinExistence type="evidence at protein level"/>
<name>NLTP_MUSAC</name>
<feature type="chain" id="PRO_0000405237" description="Non-specific lipid-transfer protein">
    <location>
        <begin position="1" status="less than"/>
        <end position="39" status="greater than"/>
    </location>
</feature>
<feature type="disulfide bond" evidence="1">
    <location>
        <begin position="3"/>
        <end status="unknown"/>
    </location>
</feature>
<feature type="disulfide bond" evidence="1">
    <location>
        <begin position="13"/>
        <end status="unknown"/>
    </location>
</feature>
<feature type="non-consecutive residues" evidence="3">
    <location>
        <begin position="22"/>
        <end position="23"/>
    </location>
</feature>
<feature type="non-terminal residue">
    <location>
        <position position="1"/>
    </location>
</feature>
<feature type="non-terminal residue">
    <location>
        <position position="39"/>
    </location>
</feature>
<comment type="function">
    <text evidence="1">Plant non-specific lipid-transfer proteins transfer phospholipids as well as galactolipids across membranes. May play a role in wax or cutin deposition in the cell walls of expanding epidermal cells and certain secretory tissues (By similarity).</text>
</comment>
<comment type="similarity">
    <text evidence="2">Belongs to the plant LTP family.</text>
</comment>
<comment type="caution">
    <text evidence="3">The order of the peptides shown is unknown.</text>
</comment>
<dbReference type="Allergome" id="8197">
    <property type="allergen name" value="Mus a 3"/>
</dbReference>
<dbReference type="Allergome" id="8198">
    <property type="allergen name" value="Mus a 3.0101"/>
</dbReference>
<dbReference type="GO" id="GO:0008289">
    <property type="term" value="F:lipid binding"/>
    <property type="evidence" value="ECO:0007669"/>
    <property type="project" value="UniProtKB-KW"/>
</dbReference>
<organism>
    <name type="scientific">Musa acuminata</name>
    <name type="common">Banana</name>
    <name type="synonym">Musa cavendishii</name>
    <dbReference type="NCBI Taxonomy" id="4641"/>
    <lineage>
        <taxon>Eukaryota</taxon>
        <taxon>Viridiplantae</taxon>
        <taxon>Streptophyta</taxon>
        <taxon>Embryophyta</taxon>
        <taxon>Tracheophyta</taxon>
        <taxon>Spermatophyta</taxon>
        <taxon>Magnoliopsida</taxon>
        <taxon>Liliopsida</taxon>
        <taxon>Zingiberales</taxon>
        <taxon>Musaceae</taxon>
        <taxon>Musa</taxon>
    </lineage>
</organism>
<keyword id="KW-0903">Direct protein sequencing</keyword>
<keyword id="KW-1015">Disulfide bond</keyword>
<keyword id="KW-0446">Lipid-binding</keyword>
<keyword id="KW-0813">Transport</keyword>